<dbReference type="EMBL" id="AB055278">
    <property type="protein sequence ID" value="BAB21902.1"/>
    <property type="molecule type" value="mRNA"/>
</dbReference>
<dbReference type="RefSeq" id="NP_001271116.1">
    <property type="nucleotide sequence ID" value="NM_001284187.1"/>
</dbReference>
<dbReference type="SMR" id="Q9BGX9"/>
<dbReference type="eggNOG" id="ENOG502S981">
    <property type="taxonomic scope" value="Eukaryota"/>
</dbReference>
<dbReference type="Proteomes" id="UP000233100">
    <property type="component" value="Unplaced"/>
</dbReference>
<dbReference type="GO" id="GO:0016020">
    <property type="term" value="C:membrane"/>
    <property type="evidence" value="ECO:0007669"/>
    <property type="project" value="UniProtKB-SubCell"/>
</dbReference>
<dbReference type="InterPro" id="IPR037670">
    <property type="entry name" value="C11orf87"/>
</dbReference>
<dbReference type="PANTHER" id="PTHR31870:SF2">
    <property type="entry name" value="CHROMOSOME 11 OPEN READING FRAME 87"/>
    <property type="match status" value="1"/>
</dbReference>
<dbReference type="PANTHER" id="PTHR31870">
    <property type="entry name" value="SI:DKEY-183I3.9-RELATED"/>
    <property type="match status" value="1"/>
</dbReference>
<reference key="1">
    <citation type="journal article" date="2002" name="Genome Biol.">
        <title>Prediction of unidentified human genes on the basis of sequence similarity to novel cDNAs from cynomolgus monkey brain.</title>
        <authorList>
            <person name="Osada N."/>
            <person name="Hida M."/>
            <person name="Kusuda J."/>
            <person name="Tanuma R."/>
            <person name="Hirata M."/>
            <person name="Hirai M."/>
            <person name="Terao K."/>
            <person name="Suzuki Y."/>
            <person name="Sugano S."/>
            <person name="Hashimoto K."/>
        </authorList>
    </citation>
    <scope>NUCLEOTIDE SEQUENCE [LARGE SCALE MRNA]</scope>
    <source>
        <tissue>Frontal cortex</tissue>
    </source>
</reference>
<sequence>MSARAPKELRLALPPCLLNRTFASPNASGSGNTGARGPGAGGSGTCITQVGQQLFQSFSSTLVLIVLVTLIFCLIVLSLSTFHIHKRRMKKRKMQRAQEEYERDHCSGSRGGGGLPRPGRQAPTHTKETRLERQPRDSPFCAPSNASSSSSSSPGLLCQGPCAPPPPPPASSPQGAHAASSCLDTAGEGLLQTVVLS</sequence>
<gene>
    <name type="ORF">QflA-11381</name>
</gene>
<comment type="subcellular location">
    <subcellularLocation>
        <location evidence="3">Membrane</location>
        <topology evidence="3">Single-pass type I membrane protein</topology>
    </subcellularLocation>
</comment>
<protein>
    <recommendedName>
        <fullName>Uncharacterized protein C11orf87 homolog</fullName>
    </recommendedName>
</protein>
<feature type="signal peptide" evidence="1">
    <location>
        <begin position="1"/>
        <end position="23"/>
    </location>
</feature>
<feature type="chain" id="PRO_0000320196" description="Uncharacterized protein C11orf87 homolog">
    <location>
        <begin position="24"/>
        <end position="197"/>
    </location>
</feature>
<feature type="topological domain" description="Extracellular" evidence="1">
    <location>
        <begin position="24"/>
        <end position="61"/>
    </location>
</feature>
<feature type="transmembrane region" description="Helical" evidence="1">
    <location>
        <begin position="62"/>
        <end position="82"/>
    </location>
</feature>
<feature type="topological domain" description="Cytoplasmic" evidence="1">
    <location>
        <begin position="83"/>
        <end position="197"/>
    </location>
</feature>
<feature type="region of interest" description="Disordered" evidence="2">
    <location>
        <begin position="94"/>
        <end position="180"/>
    </location>
</feature>
<feature type="compositionally biased region" description="Basic and acidic residues" evidence="2">
    <location>
        <begin position="96"/>
        <end position="107"/>
    </location>
</feature>
<feature type="compositionally biased region" description="Basic and acidic residues" evidence="2">
    <location>
        <begin position="125"/>
        <end position="136"/>
    </location>
</feature>
<feature type="compositionally biased region" description="Low complexity" evidence="2">
    <location>
        <begin position="147"/>
        <end position="161"/>
    </location>
</feature>
<feature type="compositionally biased region" description="Pro residues" evidence="2">
    <location>
        <begin position="162"/>
        <end position="171"/>
    </location>
</feature>
<feature type="glycosylation site" description="N-linked (GlcNAc...) asparagine" evidence="1">
    <location>
        <position position="19"/>
    </location>
</feature>
<feature type="glycosylation site" description="N-linked (GlcNAc...) asparagine" evidence="1">
    <location>
        <position position="26"/>
    </location>
</feature>
<name>CK087_MACFA</name>
<organism>
    <name type="scientific">Macaca fascicularis</name>
    <name type="common">Crab-eating macaque</name>
    <name type="synonym">Cynomolgus monkey</name>
    <dbReference type="NCBI Taxonomy" id="9541"/>
    <lineage>
        <taxon>Eukaryota</taxon>
        <taxon>Metazoa</taxon>
        <taxon>Chordata</taxon>
        <taxon>Craniata</taxon>
        <taxon>Vertebrata</taxon>
        <taxon>Euteleostomi</taxon>
        <taxon>Mammalia</taxon>
        <taxon>Eutheria</taxon>
        <taxon>Euarchontoglires</taxon>
        <taxon>Primates</taxon>
        <taxon>Haplorrhini</taxon>
        <taxon>Catarrhini</taxon>
        <taxon>Cercopithecidae</taxon>
        <taxon>Cercopithecinae</taxon>
        <taxon>Macaca</taxon>
    </lineage>
</organism>
<accession>Q9BGX9</accession>
<evidence type="ECO:0000255" key="1"/>
<evidence type="ECO:0000256" key="2">
    <source>
        <dbReference type="SAM" id="MobiDB-lite"/>
    </source>
</evidence>
<evidence type="ECO:0000305" key="3"/>
<proteinExistence type="evidence at transcript level"/>
<keyword id="KW-0325">Glycoprotein</keyword>
<keyword id="KW-0472">Membrane</keyword>
<keyword id="KW-1185">Reference proteome</keyword>
<keyword id="KW-0732">Signal</keyword>
<keyword id="KW-0812">Transmembrane</keyword>
<keyword id="KW-1133">Transmembrane helix</keyword>